<comment type="function">
    <text evidence="1">This protein binds specifically to 23S rRNA.</text>
</comment>
<comment type="function">
    <text evidence="1">The globular domain of the protein is located near the polypeptide exit tunnel on the outside of the subunit, while an extended beta-hairpin is found that lines the wall of the exit tunnel in the center of the 70S ribosome.</text>
</comment>
<comment type="subunit">
    <text evidence="1">Part of the 50S ribosomal subunit.</text>
</comment>
<comment type="subcellular location">
    <subcellularLocation>
        <location>Plastid</location>
        <location>Chloroplast</location>
    </subcellularLocation>
</comment>
<comment type="similarity">
    <text evidence="2">Belongs to the universal ribosomal protein uL22 family.</text>
</comment>
<sequence length="149" mass="17683">MTSFKLVKYTPRIKKKKSGLRKLARKVPTDRLLKFERVFKAQKRIHMSVFKVQRVLDEIRWRYYEETVMILNLMPYRASYPILKLVYSAAANATHYRDFDKANLFITKAEVSRSTIMNKFRPRARGRSSPIKKTMCHITIVLNIVKKSK</sequence>
<dbReference type="EMBL" id="AY522329">
    <property type="protein sequence ID" value="AAS46083.1"/>
    <property type="molecule type" value="Genomic_DNA"/>
</dbReference>
<dbReference type="RefSeq" id="YP_009161403.1">
    <property type="nucleotide sequence ID" value="NC_027678.1"/>
</dbReference>
<dbReference type="RefSeq" id="YP_654243.1">
    <property type="nucleotide sequence ID" value="NC_008155.1"/>
</dbReference>
<dbReference type="SMR" id="P0C445"/>
<dbReference type="STRING" id="39946.P0C445"/>
<dbReference type="EnsemblPlants" id="BGIOSGA003190-TA">
    <property type="protein sequence ID" value="BGIOSGA003190-PA"/>
    <property type="gene ID" value="BGIOSGA003190"/>
</dbReference>
<dbReference type="EnsemblPlants" id="BGIOSGA040026-TA">
    <property type="protein sequence ID" value="BGIOSGA040026-PA"/>
    <property type="gene ID" value="BGIOSGA040026"/>
</dbReference>
<dbReference type="GeneID" id="4126901"/>
<dbReference type="Gramene" id="BGIOSGA003190-TA">
    <property type="protein sequence ID" value="BGIOSGA003190-PA"/>
    <property type="gene ID" value="BGIOSGA003190"/>
</dbReference>
<dbReference type="Gramene" id="BGIOSGA040026-TA">
    <property type="protein sequence ID" value="BGIOSGA040026-PA"/>
    <property type="gene ID" value="BGIOSGA040026"/>
</dbReference>
<dbReference type="HOGENOM" id="CLU_1878437_0_0_1"/>
<dbReference type="OMA" id="KRIQPRA"/>
<dbReference type="Proteomes" id="UP000007015">
    <property type="component" value="Chloroplast"/>
</dbReference>
<dbReference type="GO" id="GO:0009507">
    <property type="term" value="C:chloroplast"/>
    <property type="evidence" value="ECO:0007669"/>
    <property type="project" value="UniProtKB-SubCell"/>
</dbReference>
<dbReference type="GO" id="GO:0015934">
    <property type="term" value="C:large ribosomal subunit"/>
    <property type="evidence" value="ECO:0007669"/>
    <property type="project" value="InterPro"/>
</dbReference>
<dbReference type="GO" id="GO:0009536">
    <property type="term" value="C:plastid"/>
    <property type="evidence" value="ECO:0000305"/>
    <property type="project" value="Gramene"/>
</dbReference>
<dbReference type="GO" id="GO:0019843">
    <property type="term" value="F:rRNA binding"/>
    <property type="evidence" value="ECO:0007669"/>
    <property type="project" value="UniProtKB-UniRule"/>
</dbReference>
<dbReference type="GO" id="GO:0003735">
    <property type="term" value="F:structural constituent of ribosome"/>
    <property type="evidence" value="ECO:0007669"/>
    <property type="project" value="InterPro"/>
</dbReference>
<dbReference type="GO" id="GO:0006412">
    <property type="term" value="P:translation"/>
    <property type="evidence" value="ECO:0007669"/>
    <property type="project" value="UniProtKB-UniRule"/>
</dbReference>
<dbReference type="CDD" id="cd00336">
    <property type="entry name" value="Ribosomal_L22"/>
    <property type="match status" value="1"/>
</dbReference>
<dbReference type="FunFam" id="3.90.470.10:FF:000004">
    <property type="entry name" value="50S ribosomal protein L22, chloroplastic"/>
    <property type="match status" value="1"/>
</dbReference>
<dbReference type="Gene3D" id="3.90.470.10">
    <property type="entry name" value="Ribosomal protein L22/L17"/>
    <property type="match status" value="1"/>
</dbReference>
<dbReference type="HAMAP" id="MF_01331_B">
    <property type="entry name" value="Ribosomal_uL22_B"/>
    <property type="match status" value="1"/>
</dbReference>
<dbReference type="InterPro" id="IPR001063">
    <property type="entry name" value="Ribosomal_uL22"/>
</dbReference>
<dbReference type="InterPro" id="IPR005727">
    <property type="entry name" value="Ribosomal_uL22_bac/chlpt-type"/>
</dbReference>
<dbReference type="InterPro" id="IPR047867">
    <property type="entry name" value="Ribosomal_uL22_bac/org-type"/>
</dbReference>
<dbReference type="InterPro" id="IPR018260">
    <property type="entry name" value="Ribosomal_uL22_CS"/>
</dbReference>
<dbReference type="InterPro" id="IPR036394">
    <property type="entry name" value="Ribosomal_uL22_sf"/>
</dbReference>
<dbReference type="NCBIfam" id="TIGR01044">
    <property type="entry name" value="rplV_bact"/>
    <property type="match status" value="1"/>
</dbReference>
<dbReference type="PANTHER" id="PTHR13501">
    <property type="entry name" value="CHLOROPLAST 50S RIBOSOMAL PROTEIN L22-RELATED"/>
    <property type="match status" value="1"/>
</dbReference>
<dbReference type="PANTHER" id="PTHR13501:SF10">
    <property type="entry name" value="LARGE RIBOSOMAL SUBUNIT PROTEIN UL22M"/>
    <property type="match status" value="1"/>
</dbReference>
<dbReference type="Pfam" id="PF00237">
    <property type="entry name" value="Ribosomal_L22"/>
    <property type="match status" value="1"/>
</dbReference>
<dbReference type="SUPFAM" id="SSF54843">
    <property type="entry name" value="Ribosomal protein L22"/>
    <property type="match status" value="1"/>
</dbReference>
<dbReference type="PROSITE" id="PS00464">
    <property type="entry name" value="RIBOSOMAL_L22"/>
    <property type="match status" value="1"/>
</dbReference>
<geneLocation type="chloroplast"/>
<gene>
    <name type="primary">rpl22</name>
    <name type="ORF">9311115</name>
</gene>
<proteinExistence type="inferred from homology"/>
<protein>
    <recommendedName>
        <fullName evidence="2">Large ribosomal subunit protein uL22c</fullName>
    </recommendedName>
    <alternativeName>
        <fullName>50S ribosomal protein L22, chloroplastic</fullName>
    </alternativeName>
</protein>
<evidence type="ECO:0000250" key="1"/>
<evidence type="ECO:0000305" key="2"/>
<organism>
    <name type="scientific">Oryza sativa subsp. indica</name>
    <name type="common">Rice</name>
    <dbReference type="NCBI Taxonomy" id="39946"/>
    <lineage>
        <taxon>Eukaryota</taxon>
        <taxon>Viridiplantae</taxon>
        <taxon>Streptophyta</taxon>
        <taxon>Embryophyta</taxon>
        <taxon>Tracheophyta</taxon>
        <taxon>Spermatophyta</taxon>
        <taxon>Magnoliopsida</taxon>
        <taxon>Liliopsida</taxon>
        <taxon>Poales</taxon>
        <taxon>Poaceae</taxon>
        <taxon>BOP clade</taxon>
        <taxon>Oryzoideae</taxon>
        <taxon>Oryzeae</taxon>
        <taxon>Oryzinae</taxon>
        <taxon>Oryza</taxon>
        <taxon>Oryza sativa</taxon>
    </lineage>
</organism>
<keyword id="KW-0150">Chloroplast</keyword>
<keyword id="KW-0934">Plastid</keyword>
<keyword id="KW-1185">Reference proteome</keyword>
<keyword id="KW-0687">Ribonucleoprotein</keyword>
<keyword id="KW-0689">Ribosomal protein</keyword>
<keyword id="KW-0694">RNA-binding</keyword>
<keyword id="KW-0699">rRNA-binding</keyword>
<feature type="chain" id="PRO_0000290047" description="Large ribosomal subunit protein uL22c">
    <location>
        <begin position="1"/>
        <end position="149"/>
    </location>
</feature>
<accession>P0C445</accession>
<accession>P12140</accession>
<accession>Q6QY46</accession>
<accession>Q7F1T7</accession>
<reference key="1">
    <citation type="journal article" date="2004" name="Plant Physiol.">
        <title>A comparison of rice chloroplast genomes.</title>
        <authorList>
            <person name="Tang J."/>
            <person name="Xia H."/>
            <person name="Cao M."/>
            <person name="Zhang X."/>
            <person name="Zeng W."/>
            <person name="Hu S."/>
            <person name="Tong W."/>
            <person name="Wang J."/>
            <person name="Wang J."/>
            <person name="Yu J."/>
            <person name="Yang H."/>
            <person name="Zhu L."/>
        </authorList>
    </citation>
    <scope>NUCLEOTIDE SEQUENCE [LARGE SCALE GENOMIC DNA]</scope>
    <source>
        <strain>cv. 93-11</strain>
    </source>
</reference>
<name>RK22_ORYSI</name>